<comment type="function">
    <text evidence="1">Required for maturation of urease via the functional incorporation of the urease nickel metallocenter.</text>
</comment>
<comment type="subunit">
    <text evidence="1">UreD, UreF and UreG form a complex that acts as a GTP-hydrolysis-dependent molecular chaperone, activating the urease apoprotein by helping to assemble the nickel containing metallocenter of UreC. The UreE protein probably delivers the nickel.</text>
</comment>
<comment type="subcellular location">
    <subcellularLocation>
        <location evidence="1">Cytoplasm</location>
    </subcellularLocation>
</comment>
<comment type="similarity">
    <text evidence="1">Belongs to the UreD family.</text>
</comment>
<reference key="1">
    <citation type="submission" date="2006-08" db="EMBL/GenBank/DDBJ databases">
        <title>Complete sequence of chromosome 1 of Burkholderia cenocepacia HI2424.</title>
        <authorList>
            <person name="Copeland A."/>
            <person name="Lucas S."/>
            <person name="Lapidus A."/>
            <person name="Barry K."/>
            <person name="Detter J.C."/>
            <person name="Glavina del Rio T."/>
            <person name="Hammon N."/>
            <person name="Israni S."/>
            <person name="Pitluck S."/>
            <person name="Chain P."/>
            <person name="Malfatti S."/>
            <person name="Shin M."/>
            <person name="Vergez L."/>
            <person name="Schmutz J."/>
            <person name="Larimer F."/>
            <person name="Land M."/>
            <person name="Hauser L."/>
            <person name="Kyrpides N."/>
            <person name="Kim E."/>
            <person name="LiPuma J.J."/>
            <person name="Gonzalez C.F."/>
            <person name="Konstantinidis K."/>
            <person name="Tiedje J.M."/>
            <person name="Richardson P."/>
        </authorList>
    </citation>
    <scope>NUCLEOTIDE SEQUENCE [LARGE SCALE GENOMIC DNA]</scope>
    <source>
        <strain>HI2424</strain>
    </source>
</reference>
<dbReference type="EMBL" id="CP000458">
    <property type="protein sequence ID" value="ABK07656.1"/>
    <property type="molecule type" value="Genomic_DNA"/>
</dbReference>
<dbReference type="RefSeq" id="WP_011694192.1">
    <property type="nucleotide sequence ID" value="NC_008542.1"/>
</dbReference>
<dbReference type="SMR" id="A0K579"/>
<dbReference type="KEGG" id="bch:Bcen2424_0903"/>
<dbReference type="HOGENOM" id="CLU_056339_0_0_4"/>
<dbReference type="GO" id="GO:0005737">
    <property type="term" value="C:cytoplasm"/>
    <property type="evidence" value="ECO:0007669"/>
    <property type="project" value="UniProtKB-SubCell"/>
</dbReference>
<dbReference type="GO" id="GO:0016151">
    <property type="term" value="F:nickel cation binding"/>
    <property type="evidence" value="ECO:0007669"/>
    <property type="project" value="UniProtKB-UniRule"/>
</dbReference>
<dbReference type="HAMAP" id="MF_01384">
    <property type="entry name" value="UreD"/>
    <property type="match status" value="1"/>
</dbReference>
<dbReference type="InterPro" id="IPR002669">
    <property type="entry name" value="UreD"/>
</dbReference>
<dbReference type="PANTHER" id="PTHR33643">
    <property type="entry name" value="UREASE ACCESSORY PROTEIN D"/>
    <property type="match status" value="1"/>
</dbReference>
<dbReference type="PANTHER" id="PTHR33643:SF1">
    <property type="entry name" value="UREASE ACCESSORY PROTEIN D"/>
    <property type="match status" value="1"/>
</dbReference>
<dbReference type="Pfam" id="PF01774">
    <property type="entry name" value="UreD"/>
    <property type="match status" value="1"/>
</dbReference>
<feature type="chain" id="PRO_0000340432" description="Urease accessory protein UreD">
    <location>
        <begin position="1"/>
        <end position="291"/>
    </location>
</feature>
<accession>A0K579</accession>
<sequence>MSAPDSHAPLSRPAVAKSWRGRLELGFERHGARTTLAHRLHDGPLRVQRPLYPEGDAICHAVIVHPPGGVAGGDRLDIDIALGDGTHAVLTTPGATKWYKSNGLDATQRIGIAVGPHAKLDWLPQNNLFFDAAHAALDFTVTLGEGASAIGWDATQIGRQAAGETWAAGRIASTSALVAADGRPLWTERALLDARDPLRGALQGLAGFPAYGTLWAAGAACDAALAEALAARMPFDDTLRAAATCVTPGVVLVRAISTSMEALQRHFTDCWLRLRPIVHDVDARPLRLWQT</sequence>
<gene>
    <name evidence="1" type="primary">ureD</name>
    <name type="ordered locus">Bcen2424_0903</name>
</gene>
<proteinExistence type="inferred from homology"/>
<evidence type="ECO:0000255" key="1">
    <source>
        <dbReference type="HAMAP-Rule" id="MF_01384"/>
    </source>
</evidence>
<name>URED_BURCH</name>
<organism>
    <name type="scientific">Burkholderia cenocepacia (strain HI2424)</name>
    <dbReference type="NCBI Taxonomy" id="331272"/>
    <lineage>
        <taxon>Bacteria</taxon>
        <taxon>Pseudomonadati</taxon>
        <taxon>Pseudomonadota</taxon>
        <taxon>Betaproteobacteria</taxon>
        <taxon>Burkholderiales</taxon>
        <taxon>Burkholderiaceae</taxon>
        <taxon>Burkholderia</taxon>
        <taxon>Burkholderia cepacia complex</taxon>
    </lineage>
</organism>
<keyword id="KW-0143">Chaperone</keyword>
<keyword id="KW-0963">Cytoplasm</keyword>
<keyword id="KW-0996">Nickel insertion</keyword>
<protein>
    <recommendedName>
        <fullName evidence="1">Urease accessory protein UreD</fullName>
    </recommendedName>
</protein>